<feature type="chain" id="PRO_1000216128" description="Dual-specificity RNA methyltransferase RlmN">
    <location>
        <begin position="1"/>
        <end position="373"/>
    </location>
</feature>
<feature type="domain" description="Radical SAM core" evidence="2">
    <location>
        <begin position="100"/>
        <end position="339"/>
    </location>
</feature>
<feature type="active site" description="Proton acceptor" evidence="1">
    <location>
        <position position="94"/>
    </location>
</feature>
<feature type="active site" description="S-methylcysteine intermediate" evidence="1">
    <location>
        <position position="344"/>
    </location>
</feature>
<feature type="binding site" evidence="1">
    <location>
        <position position="114"/>
    </location>
    <ligand>
        <name>[4Fe-4S] cluster</name>
        <dbReference type="ChEBI" id="CHEBI:49883"/>
        <note>4Fe-4S-S-AdoMet</note>
    </ligand>
</feature>
<feature type="binding site" evidence="1">
    <location>
        <position position="118"/>
    </location>
    <ligand>
        <name>[4Fe-4S] cluster</name>
        <dbReference type="ChEBI" id="CHEBI:49883"/>
        <note>4Fe-4S-S-AdoMet</note>
    </ligand>
</feature>
<feature type="binding site" evidence="1">
    <location>
        <position position="121"/>
    </location>
    <ligand>
        <name>[4Fe-4S] cluster</name>
        <dbReference type="ChEBI" id="CHEBI:49883"/>
        <note>4Fe-4S-S-AdoMet</note>
    </ligand>
</feature>
<feature type="binding site" evidence="1">
    <location>
        <begin position="168"/>
        <end position="169"/>
    </location>
    <ligand>
        <name>S-adenosyl-L-methionine</name>
        <dbReference type="ChEBI" id="CHEBI:59789"/>
    </ligand>
</feature>
<feature type="binding site" evidence="1">
    <location>
        <position position="200"/>
    </location>
    <ligand>
        <name>S-adenosyl-L-methionine</name>
        <dbReference type="ChEBI" id="CHEBI:59789"/>
    </ligand>
</feature>
<feature type="binding site" evidence="1">
    <location>
        <begin position="222"/>
        <end position="224"/>
    </location>
    <ligand>
        <name>S-adenosyl-L-methionine</name>
        <dbReference type="ChEBI" id="CHEBI:59789"/>
    </ligand>
</feature>
<feature type="binding site" evidence="1">
    <location>
        <position position="301"/>
    </location>
    <ligand>
        <name>S-adenosyl-L-methionine</name>
        <dbReference type="ChEBI" id="CHEBI:59789"/>
    </ligand>
</feature>
<feature type="disulfide bond" description="(transient)" evidence="1">
    <location>
        <begin position="107"/>
        <end position="344"/>
    </location>
</feature>
<accession>C4LC34</accession>
<protein>
    <recommendedName>
        <fullName evidence="1">Dual-specificity RNA methyltransferase RlmN</fullName>
        <ecNumber evidence="1">2.1.1.192</ecNumber>
    </recommendedName>
    <alternativeName>
        <fullName evidence="1">23S rRNA (adenine(2503)-C(2))-methyltransferase</fullName>
    </alternativeName>
    <alternativeName>
        <fullName evidence="1">23S rRNA m2A2503 methyltransferase</fullName>
    </alternativeName>
    <alternativeName>
        <fullName evidence="1">Ribosomal RNA large subunit methyltransferase N</fullName>
    </alternativeName>
    <alternativeName>
        <fullName evidence="1">tRNA (adenine(37)-C(2))-methyltransferase</fullName>
    </alternativeName>
    <alternativeName>
        <fullName evidence="1">tRNA m2A37 methyltransferase</fullName>
    </alternativeName>
</protein>
<evidence type="ECO:0000255" key="1">
    <source>
        <dbReference type="HAMAP-Rule" id="MF_01849"/>
    </source>
</evidence>
<evidence type="ECO:0000255" key="2">
    <source>
        <dbReference type="PROSITE-ProRule" id="PRU01266"/>
    </source>
</evidence>
<sequence>MSENKVNLLDFDRNALRAFFADELGEKAFRADQIMKWIYHFGCDDFSQMTNVNKALREKLARIAEIRAPEISTEQRSSDGTIKWAMRVGDQEVETVYIPEADRATLCVSSQVGCALECKFCSTGQQGFNRNLTVSEIIGQVWRAAQVVGFPKDTGKRVITNVVMMGMGEPLLNLSNLVPALSLMMEDFGFGLSKRRVTVSTSGVVPALDKLGDMIDVALAISLHAPNDKLRSEIMPINDKYNIQEFLGSVQRYLSKSNANHGRVTVEYVLLDHVNDDMEHARELAELLKDTPSKINLIPFNPFPSNPYGKPSNSRVDRFSKVLMEYGYTVIVRKTRGDDIDAACGQLVGDVIDRTKRTMKKRMQEQEISVKML</sequence>
<comment type="function">
    <text evidence="1">Specifically methylates position 2 of adenine 2503 in 23S rRNA and position 2 of adenine 37 in tRNAs. m2A2503 modification seems to play a crucial role in the proofreading step occurring at the peptidyl transferase center and thus would serve to optimize ribosomal fidelity.</text>
</comment>
<comment type="catalytic activity">
    <reaction evidence="1">
        <text>adenosine(2503) in 23S rRNA + 2 reduced [2Fe-2S]-[ferredoxin] + 2 S-adenosyl-L-methionine = 2-methyladenosine(2503) in 23S rRNA + 5'-deoxyadenosine + L-methionine + 2 oxidized [2Fe-2S]-[ferredoxin] + S-adenosyl-L-homocysteine</text>
        <dbReference type="Rhea" id="RHEA:42916"/>
        <dbReference type="Rhea" id="RHEA-COMP:10000"/>
        <dbReference type="Rhea" id="RHEA-COMP:10001"/>
        <dbReference type="Rhea" id="RHEA-COMP:10152"/>
        <dbReference type="Rhea" id="RHEA-COMP:10282"/>
        <dbReference type="ChEBI" id="CHEBI:17319"/>
        <dbReference type="ChEBI" id="CHEBI:33737"/>
        <dbReference type="ChEBI" id="CHEBI:33738"/>
        <dbReference type="ChEBI" id="CHEBI:57844"/>
        <dbReference type="ChEBI" id="CHEBI:57856"/>
        <dbReference type="ChEBI" id="CHEBI:59789"/>
        <dbReference type="ChEBI" id="CHEBI:74411"/>
        <dbReference type="ChEBI" id="CHEBI:74497"/>
        <dbReference type="EC" id="2.1.1.192"/>
    </reaction>
</comment>
<comment type="catalytic activity">
    <reaction evidence="1">
        <text>adenosine(37) in tRNA + 2 reduced [2Fe-2S]-[ferredoxin] + 2 S-adenosyl-L-methionine = 2-methyladenosine(37) in tRNA + 5'-deoxyadenosine + L-methionine + 2 oxidized [2Fe-2S]-[ferredoxin] + S-adenosyl-L-homocysteine</text>
        <dbReference type="Rhea" id="RHEA:43332"/>
        <dbReference type="Rhea" id="RHEA-COMP:10000"/>
        <dbReference type="Rhea" id="RHEA-COMP:10001"/>
        <dbReference type="Rhea" id="RHEA-COMP:10162"/>
        <dbReference type="Rhea" id="RHEA-COMP:10485"/>
        <dbReference type="ChEBI" id="CHEBI:17319"/>
        <dbReference type="ChEBI" id="CHEBI:33737"/>
        <dbReference type="ChEBI" id="CHEBI:33738"/>
        <dbReference type="ChEBI" id="CHEBI:57844"/>
        <dbReference type="ChEBI" id="CHEBI:57856"/>
        <dbReference type="ChEBI" id="CHEBI:59789"/>
        <dbReference type="ChEBI" id="CHEBI:74411"/>
        <dbReference type="ChEBI" id="CHEBI:74497"/>
        <dbReference type="EC" id="2.1.1.192"/>
    </reaction>
</comment>
<comment type="cofactor">
    <cofactor evidence="1">
        <name>[4Fe-4S] cluster</name>
        <dbReference type="ChEBI" id="CHEBI:49883"/>
    </cofactor>
    <text evidence="1">Binds 1 [4Fe-4S] cluster. The cluster is coordinated with 3 cysteines and an exchangeable S-adenosyl-L-methionine.</text>
</comment>
<comment type="subcellular location">
    <subcellularLocation>
        <location evidence="1">Cytoplasm</location>
    </subcellularLocation>
</comment>
<comment type="miscellaneous">
    <text evidence="1">Reaction proceeds by a ping-pong mechanism involving intermediate methylation of a conserved cysteine residue.</text>
</comment>
<comment type="similarity">
    <text evidence="1">Belongs to the radical SAM superfamily. RlmN family.</text>
</comment>
<keyword id="KW-0004">4Fe-4S</keyword>
<keyword id="KW-0963">Cytoplasm</keyword>
<keyword id="KW-1015">Disulfide bond</keyword>
<keyword id="KW-0408">Iron</keyword>
<keyword id="KW-0411">Iron-sulfur</keyword>
<keyword id="KW-0479">Metal-binding</keyword>
<keyword id="KW-0489">Methyltransferase</keyword>
<keyword id="KW-1185">Reference proteome</keyword>
<keyword id="KW-0698">rRNA processing</keyword>
<keyword id="KW-0949">S-adenosyl-L-methionine</keyword>
<keyword id="KW-0808">Transferase</keyword>
<keyword id="KW-0819">tRNA processing</keyword>
<name>RLMN_TOLAT</name>
<reference key="1">
    <citation type="submission" date="2009-05" db="EMBL/GenBank/DDBJ databases">
        <title>Complete sequence of Tolumonas auensis DSM 9187.</title>
        <authorList>
            <consortium name="US DOE Joint Genome Institute"/>
            <person name="Lucas S."/>
            <person name="Copeland A."/>
            <person name="Lapidus A."/>
            <person name="Glavina del Rio T."/>
            <person name="Tice H."/>
            <person name="Bruce D."/>
            <person name="Goodwin L."/>
            <person name="Pitluck S."/>
            <person name="Chertkov O."/>
            <person name="Brettin T."/>
            <person name="Detter J.C."/>
            <person name="Han C."/>
            <person name="Larimer F."/>
            <person name="Land M."/>
            <person name="Hauser L."/>
            <person name="Kyrpides N."/>
            <person name="Mikhailova N."/>
            <person name="Spring S."/>
            <person name="Beller H."/>
        </authorList>
    </citation>
    <scope>NUCLEOTIDE SEQUENCE [LARGE SCALE GENOMIC DNA]</scope>
    <source>
        <strain>DSM 9187 / NBRC 110442 / TA 4</strain>
    </source>
</reference>
<organism>
    <name type="scientific">Tolumonas auensis (strain DSM 9187 / NBRC 110442 / TA 4)</name>
    <dbReference type="NCBI Taxonomy" id="595494"/>
    <lineage>
        <taxon>Bacteria</taxon>
        <taxon>Pseudomonadati</taxon>
        <taxon>Pseudomonadota</taxon>
        <taxon>Gammaproteobacteria</taxon>
        <taxon>Aeromonadales</taxon>
        <taxon>Aeromonadaceae</taxon>
        <taxon>Tolumonas</taxon>
    </lineage>
</organism>
<gene>
    <name evidence="1" type="primary">rlmN</name>
    <name type="ordered locus">Tola_0885</name>
</gene>
<proteinExistence type="inferred from homology"/>
<dbReference type="EC" id="2.1.1.192" evidence="1"/>
<dbReference type="EMBL" id="CP001616">
    <property type="protein sequence ID" value="ACQ92513.1"/>
    <property type="molecule type" value="Genomic_DNA"/>
</dbReference>
<dbReference type="RefSeq" id="WP_012729112.1">
    <property type="nucleotide sequence ID" value="NC_012691.1"/>
</dbReference>
<dbReference type="SMR" id="C4LC34"/>
<dbReference type="STRING" id="595494.Tola_0885"/>
<dbReference type="KEGG" id="tau:Tola_0885"/>
<dbReference type="eggNOG" id="COG0820">
    <property type="taxonomic scope" value="Bacteria"/>
</dbReference>
<dbReference type="HOGENOM" id="CLU_029101_0_0_6"/>
<dbReference type="OrthoDB" id="9793973at2"/>
<dbReference type="Proteomes" id="UP000009073">
    <property type="component" value="Chromosome"/>
</dbReference>
<dbReference type="GO" id="GO:0005737">
    <property type="term" value="C:cytoplasm"/>
    <property type="evidence" value="ECO:0007669"/>
    <property type="project" value="UniProtKB-SubCell"/>
</dbReference>
<dbReference type="GO" id="GO:0051539">
    <property type="term" value="F:4 iron, 4 sulfur cluster binding"/>
    <property type="evidence" value="ECO:0007669"/>
    <property type="project" value="UniProtKB-UniRule"/>
</dbReference>
<dbReference type="GO" id="GO:0046872">
    <property type="term" value="F:metal ion binding"/>
    <property type="evidence" value="ECO:0007669"/>
    <property type="project" value="UniProtKB-KW"/>
</dbReference>
<dbReference type="GO" id="GO:0070040">
    <property type="term" value="F:rRNA (adenine(2503)-C2-)-methyltransferase activity"/>
    <property type="evidence" value="ECO:0007669"/>
    <property type="project" value="UniProtKB-UniRule"/>
</dbReference>
<dbReference type="GO" id="GO:0019843">
    <property type="term" value="F:rRNA binding"/>
    <property type="evidence" value="ECO:0007669"/>
    <property type="project" value="UniProtKB-UniRule"/>
</dbReference>
<dbReference type="GO" id="GO:0002935">
    <property type="term" value="F:tRNA (adenine(37)-C2)-methyltransferase activity"/>
    <property type="evidence" value="ECO:0007669"/>
    <property type="project" value="UniProtKB-UniRule"/>
</dbReference>
<dbReference type="GO" id="GO:0000049">
    <property type="term" value="F:tRNA binding"/>
    <property type="evidence" value="ECO:0007669"/>
    <property type="project" value="UniProtKB-UniRule"/>
</dbReference>
<dbReference type="GO" id="GO:0070475">
    <property type="term" value="P:rRNA base methylation"/>
    <property type="evidence" value="ECO:0007669"/>
    <property type="project" value="UniProtKB-UniRule"/>
</dbReference>
<dbReference type="GO" id="GO:0030488">
    <property type="term" value="P:tRNA methylation"/>
    <property type="evidence" value="ECO:0007669"/>
    <property type="project" value="UniProtKB-UniRule"/>
</dbReference>
<dbReference type="CDD" id="cd01335">
    <property type="entry name" value="Radical_SAM"/>
    <property type="match status" value="1"/>
</dbReference>
<dbReference type="FunFam" id="1.10.150.530:FF:000003">
    <property type="entry name" value="Dual-specificity RNA methyltransferase RlmN"/>
    <property type="match status" value="1"/>
</dbReference>
<dbReference type="FunFam" id="3.20.20.70:FF:000008">
    <property type="entry name" value="Dual-specificity RNA methyltransferase RlmN"/>
    <property type="match status" value="1"/>
</dbReference>
<dbReference type="Gene3D" id="1.10.150.530">
    <property type="match status" value="1"/>
</dbReference>
<dbReference type="Gene3D" id="3.20.20.70">
    <property type="entry name" value="Aldolase class I"/>
    <property type="match status" value="1"/>
</dbReference>
<dbReference type="HAMAP" id="MF_01849">
    <property type="entry name" value="RNA_methyltr_RlmN"/>
    <property type="match status" value="1"/>
</dbReference>
<dbReference type="InterPro" id="IPR013785">
    <property type="entry name" value="Aldolase_TIM"/>
</dbReference>
<dbReference type="InterPro" id="IPR040072">
    <property type="entry name" value="Methyltransferase_A"/>
</dbReference>
<dbReference type="InterPro" id="IPR048641">
    <property type="entry name" value="RlmN_N"/>
</dbReference>
<dbReference type="InterPro" id="IPR027492">
    <property type="entry name" value="RNA_MTrfase_RlmN"/>
</dbReference>
<dbReference type="InterPro" id="IPR004383">
    <property type="entry name" value="rRNA_lsu_MTrfase_RlmN/Cfr"/>
</dbReference>
<dbReference type="InterPro" id="IPR007197">
    <property type="entry name" value="rSAM"/>
</dbReference>
<dbReference type="NCBIfam" id="NF008396">
    <property type="entry name" value="PRK11194.1"/>
    <property type="match status" value="1"/>
</dbReference>
<dbReference type="NCBIfam" id="TIGR00048">
    <property type="entry name" value="rRNA_mod_RlmN"/>
    <property type="match status" value="1"/>
</dbReference>
<dbReference type="PANTHER" id="PTHR30544">
    <property type="entry name" value="23S RRNA METHYLTRANSFERASE"/>
    <property type="match status" value="1"/>
</dbReference>
<dbReference type="PANTHER" id="PTHR30544:SF5">
    <property type="entry name" value="RADICAL SAM CORE DOMAIN-CONTAINING PROTEIN"/>
    <property type="match status" value="1"/>
</dbReference>
<dbReference type="Pfam" id="PF04055">
    <property type="entry name" value="Radical_SAM"/>
    <property type="match status" value="1"/>
</dbReference>
<dbReference type="Pfam" id="PF21016">
    <property type="entry name" value="RlmN_N"/>
    <property type="match status" value="1"/>
</dbReference>
<dbReference type="PIRSF" id="PIRSF006004">
    <property type="entry name" value="CHP00048"/>
    <property type="match status" value="1"/>
</dbReference>
<dbReference type="SFLD" id="SFLDF00275">
    <property type="entry name" value="adenosine_C2_methyltransferase"/>
    <property type="match status" value="1"/>
</dbReference>
<dbReference type="SFLD" id="SFLDS00029">
    <property type="entry name" value="Radical_SAM"/>
    <property type="match status" value="1"/>
</dbReference>
<dbReference type="SUPFAM" id="SSF102114">
    <property type="entry name" value="Radical SAM enzymes"/>
    <property type="match status" value="1"/>
</dbReference>
<dbReference type="PROSITE" id="PS51918">
    <property type="entry name" value="RADICAL_SAM"/>
    <property type="match status" value="1"/>
</dbReference>